<keyword id="KW-0025">Alternative splicing</keyword>
<keyword id="KW-0175">Coiled coil</keyword>
<keyword id="KW-0403">Intermediate filament</keyword>
<keyword id="KW-0416">Keratin</keyword>
<keyword id="KW-1267">Proteomics identification</keyword>
<keyword id="KW-1185">Reference proteome</keyword>
<gene>
    <name type="primary">KRT222</name>
    <name type="synonym">KA21</name>
    <name type="synonym">KRT222P</name>
</gene>
<feature type="chain" id="PRO_0000344215" description="Keratin-like protein KRT222">
    <location>
        <begin position="1"/>
        <end position="295"/>
    </location>
</feature>
<feature type="domain" description="IF rod" evidence="2">
    <location>
        <begin position="1"/>
        <end position="150"/>
    </location>
</feature>
<feature type="coiled-coil region" evidence="1">
    <location>
        <begin position="2"/>
        <end position="150"/>
    </location>
</feature>
<feature type="splice variant" id="VSP_034744" description="In isoform 2." evidence="3">
    <location>
        <begin position="1"/>
        <end position="40"/>
    </location>
</feature>
<evidence type="ECO:0000255" key="1"/>
<evidence type="ECO:0000255" key="2">
    <source>
        <dbReference type="PROSITE-ProRule" id="PRU01188"/>
    </source>
</evidence>
<evidence type="ECO:0000303" key="3">
    <source>
    </source>
</evidence>
<evidence type="ECO:0000305" key="4"/>
<protein>
    <recommendedName>
        <fullName>Keratin-like protein KRT222</fullName>
    </recommendedName>
    <alternativeName>
        <fullName>Keratin-222</fullName>
    </alternativeName>
    <alternativeName>
        <fullName>Keratin-222 pseudogene</fullName>
    </alternativeName>
</protein>
<name>KT222_HUMAN</name>
<organism>
    <name type="scientific">Homo sapiens</name>
    <name type="common">Human</name>
    <dbReference type="NCBI Taxonomy" id="9606"/>
    <lineage>
        <taxon>Eukaryota</taxon>
        <taxon>Metazoa</taxon>
        <taxon>Chordata</taxon>
        <taxon>Craniata</taxon>
        <taxon>Vertebrata</taxon>
        <taxon>Euteleostomi</taxon>
        <taxon>Mammalia</taxon>
        <taxon>Eutheria</taxon>
        <taxon>Euarchontoglires</taxon>
        <taxon>Primates</taxon>
        <taxon>Haplorrhini</taxon>
        <taxon>Catarrhini</taxon>
        <taxon>Hominidae</taxon>
        <taxon>Homo</taxon>
    </lineage>
</organism>
<accession>Q8N1A0</accession>
<accession>Q7Z368</accession>
<proteinExistence type="evidence at protein level"/>
<comment type="interaction">
    <interactant intactId="EBI-8473062">
        <id>Q8N1A0</id>
    </interactant>
    <interactant intactId="EBI-10988864">
        <id>P46379-2</id>
        <label>BAG6</label>
    </interactant>
    <organismsDiffer>false</organismsDiffer>
    <experiments>3</experiments>
</comment>
<comment type="interaction">
    <interactant intactId="EBI-8473062">
        <id>Q8N1A0</id>
    </interactant>
    <interactant intactId="EBI-718729">
        <id>P55212</id>
        <label>CASP6</label>
    </interactant>
    <organismsDiffer>false</organismsDiffer>
    <experiments>3</experiments>
</comment>
<comment type="interaction">
    <interactant intactId="EBI-8473062">
        <id>Q8N1A0</id>
    </interactant>
    <interactant intactId="EBI-6624398">
        <id>P06307</id>
        <label>CCK</label>
    </interactant>
    <organismsDiffer>false</organismsDiffer>
    <experiments>3</experiments>
</comment>
<comment type="interaction">
    <interactant intactId="EBI-8473062">
        <id>Q8N1A0</id>
    </interactant>
    <interactant intactId="EBI-355106">
        <id>P17066</id>
        <label>HSPA6</label>
    </interactant>
    <organismsDiffer>false</organismsDiffer>
    <experiments>3</experiments>
</comment>
<comment type="interaction">
    <interactant intactId="EBI-8473062">
        <id>Q8N1A0</id>
    </interactant>
    <interactant intactId="EBI-352682">
        <id>P04792</id>
        <label>HSPB1</label>
    </interactant>
    <organismsDiffer>false</organismsDiffer>
    <experiments>3</experiments>
</comment>
<comment type="interaction">
    <interactant intactId="EBI-8473062">
        <id>Q8N1A0</id>
    </interactant>
    <interactant intactId="EBI-6398041">
        <id>Q9UMF0</id>
        <label>ICAM5</label>
    </interactant>
    <organismsDiffer>false</organismsDiffer>
    <experiments>3</experiments>
</comment>
<comment type="interaction">
    <interactant intactId="EBI-8473062">
        <id>Q8N1A0</id>
    </interactant>
    <interactant intactId="EBI-10975473">
        <id>O60333-2</id>
        <label>KIF1B</label>
    </interactant>
    <organismsDiffer>false</organismsDiffer>
    <experiments>3</experiments>
</comment>
<comment type="interaction">
    <interactant intactId="EBI-8473062">
        <id>Q8N1A0</id>
    </interactant>
    <interactant intactId="EBI-948266">
        <id>O14901</id>
        <label>KLF11</label>
    </interactant>
    <organismsDiffer>false</organismsDiffer>
    <experiments>3</experiments>
</comment>
<comment type="interaction">
    <interactant intactId="EBI-8473062">
        <id>Q8N1A0</id>
    </interactant>
    <interactant intactId="EBI-21591415">
        <id>P13473-2</id>
        <label>LAMP2</label>
    </interactant>
    <organismsDiffer>false</organismsDiffer>
    <experiments>3</experiments>
</comment>
<comment type="interaction">
    <interactant intactId="EBI-8473062">
        <id>Q8N1A0</id>
    </interactant>
    <interactant intactId="EBI-988601">
        <id>O43933</id>
        <label>PEX1</label>
    </interactant>
    <organismsDiffer>false</organismsDiffer>
    <experiments>3</experiments>
</comment>
<comment type="interaction">
    <interactant intactId="EBI-8473062">
        <id>Q8N1A0</id>
    </interactant>
    <interactant intactId="EBI-286642">
        <id>P62826</id>
        <label>RAN</label>
    </interactant>
    <organismsDiffer>false</organismsDiffer>
    <experiments>3</experiments>
</comment>
<comment type="interaction">
    <interactant intactId="EBI-8473062">
        <id>Q8N1A0</id>
    </interactant>
    <interactant intactId="EBI-720609">
        <id>O76024</id>
        <label>WFS1</label>
    </interactant>
    <organismsDiffer>false</organismsDiffer>
    <experiments>3</experiments>
</comment>
<comment type="alternative products">
    <event type="alternative splicing"/>
    <isoform>
        <id>Q8N1A0-1</id>
        <name>1</name>
        <sequence type="displayed"/>
    </isoform>
    <isoform>
        <id>Q8N1A0-2</id>
        <name>2</name>
        <sequence type="described" ref="VSP_034744"/>
    </isoform>
</comment>
<comment type="similarity">
    <text evidence="2">Belongs to the intermediate filament family.</text>
</comment>
<comment type="caution">
    <text evidence="4">According to PubMed:16831889, it is a pseudogene.</text>
</comment>
<reference key="1">
    <citation type="journal article" date="2007" name="BMC Genomics">
        <title>The full-ORF clone resource of the German cDNA consortium.</title>
        <authorList>
            <person name="Bechtel S."/>
            <person name="Rosenfelder H."/>
            <person name="Duda A."/>
            <person name="Schmidt C.P."/>
            <person name="Ernst U."/>
            <person name="Wellenreuther R."/>
            <person name="Mehrle A."/>
            <person name="Schuster C."/>
            <person name="Bahr A."/>
            <person name="Bloecker H."/>
            <person name="Heubner D."/>
            <person name="Hoerlein A."/>
            <person name="Michel G."/>
            <person name="Wedler H."/>
            <person name="Koehrer K."/>
            <person name="Ottenwaelder B."/>
            <person name="Poustka A."/>
            <person name="Wiemann S."/>
            <person name="Schupp I."/>
        </authorList>
    </citation>
    <scope>NUCLEOTIDE SEQUENCE [LARGE SCALE MRNA] (ISOFORM 2)</scope>
    <source>
        <tissue>Cerebellum</tissue>
    </source>
</reference>
<reference key="2">
    <citation type="submission" date="2005-07" db="EMBL/GenBank/DDBJ databases">
        <authorList>
            <person name="Mural R.J."/>
            <person name="Istrail S."/>
            <person name="Sutton G.G."/>
            <person name="Florea L."/>
            <person name="Halpern A.L."/>
            <person name="Mobarry C.M."/>
            <person name="Lippert R."/>
            <person name="Walenz B."/>
            <person name="Shatkay H."/>
            <person name="Dew I."/>
            <person name="Miller J.R."/>
            <person name="Flanigan M.J."/>
            <person name="Edwards N.J."/>
            <person name="Bolanos R."/>
            <person name="Fasulo D."/>
            <person name="Halldorsson B.V."/>
            <person name="Hannenhalli S."/>
            <person name="Turner R."/>
            <person name="Yooseph S."/>
            <person name="Lu F."/>
            <person name="Nusskern D.R."/>
            <person name="Shue B.C."/>
            <person name="Zheng X.H."/>
            <person name="Zhong F."/>
            <person name="Delcher A.L."/>
            <person name="Huson D.H."/>
            <person name="Kravitz S.A."/>
            <person name="Mouchard L."/>
            <person name="Reinert K."/>
            <person name="Remington K.A."/>
            <person name="Clark A.G."/>
            <person name="Waterman M.S."/>
            <person name="Eichler E.E."/>
            <person name="Adams M.D."/>
            <person name="Hunkapiller M.W."/>
            <person name="Myers E.W."/>
            <person name="Venter J.C."/>
        </authorList>
    </citation>
    <scope>NUCLEOTIDE SEQUENCE [LARGE SCALE GENOMIC DNA]</scope>
</reference>
<reference key="3">
    <citation type="journal article" date="2004" name="Genome Res.">
        <title>The status, quality, and expansion of the NIH full-length cDNA project: the Mammalian Gene Collection (MGC).</title>
        <authorList>
            <consortium name="The MGC Project Team"/>
        </authorList>
    </citation>
    <scope>NUCLEOTIDE SEQUENCE [LARGE SCALE MRNA] (ISOFORM 1)</scope>
    <source>
        <tissue>Adrenal cortex</tissue>
    </source>
</reference>
<reference key="4">
    <citation type="journal article" date="2006" name="J. Cell Biol.">
        <title>New consensus nomenclature for mammalian keratins.</title>
        <authorList>
            <person name="Schweizer J."/>
            <person name="Bowden P.E."/>
            <person name="Coulombe P.A."/>
            <person name="Langbein L."/>
            <person name="Lane E.B."/>
            <person name="Magin T.M."/>
            <person name="Maltais L."/>
            <person name="Omary M.B."/>
            <person name="Parry D.A.D."/>
            <person name="Rogers M.A."/>
            <person name="Wright M.W."/>
        </authorList>
    </citation>
    <scope>NOMENCLATURE</scope>
</reference>
<sequence>MELSQLLNEIRANYEKILTRNQIETVLSTRIQLEEDISKKMDKDEEALKAAQAELKEARRQWHHLQVEIESLHAVERGLENSLHASEQHYQMQLQDLETVIEGLEKELQEVRRGIEKQLQEHEMLLNTKMRLEQEIATYRHLLEKEEIRYYGCIQGGKKDKKPTTSRVGFVLPSAIINEISFTTKVPQKYENENVETVTKQAILNGSIVKESTEAHGTIQTEKVDEVIKEWEGSFFKDNPRLRKKSVSLRFDLHLAATDEGCLETKQDNLPDIEVRLIMRRSCSIPSIKPPSTAN</sequence>
<dbReference type="EMBL" id="BX538083">
    <property type="protein sequence ID" value="CAD98007.1"/>
    <property type="molecule type" value="mRNA"/>
</dbReference>
<dbReference type="EMBL" id="CH471152">
    <property type="protein sequence ID" value="EAW60672.1"/>
    <property type="molecule type" value="Genomic_DNA"/>
</dbReference>
<dbReference type="EMBL" id="CH471152">
    <property type="protein sequence ID" value="EAW60673.1"/>
    <property type="molecule type" value="Genomic_DNA"/>
</dbReference>
<dbReference type="EMBL" id="BC032815">
    <property type="protein sequence ID" value="AAH32815.1"/>
    <property type="molecule type" value="mRNA"/>
</dbReference>
<dbReference type="CCDS" id="CCDS11371.1">
    <molecule id="Q8N1A0-1"/>
</dbReference>
<dbReference type="RefSeq" id="NP_689562.1">
    <molecule id="Q8N1A0-1"/>
    <property type="nucleotide sequence ID" value="NM_152349.3"/>
</dbReference>
<dbReference type="SMR" id="Q8N1A0"/>
<dbReference type="BioGRID" id="125916">
    <property type="interactions" value="35"/>
</dbReference>
<dbReference type="FunCoup" id="Q8N1A0">
    <property type="interactions" value="16"/>
</dbReference>
<dbReference type="IntAct" id="Q8N1A0">
    <property type="interactions" value="42"/>
</dbReference>
<dbReference type="MINT" id="Q8N1A0"/>
<dbReference type="STRING" id="9606.ENSP00000377616"/>
<dbReference type="GlyCosmos" id="Q8N1A0">
    <property type="glycosylation" value="1 site, 1 glycan"/>
</dbReference>
<dbReference type="GlyGen" id="Q8N1A0">
    <property type="glycosylation" value="1 site, 1 O-linked glycan (1 site)"/>
</dbReference>
<dbReference type="iPTMnet" id="Q8N1A0"/>
<dbReference type="PhosphoSitePlus" id="Q8N1A0"/>
<dbReference type="BioMuta" id="KRT222"/>
<dbReference type="DMDM" id="74750885"/>
<dbReference type="jPOST" id="Q8N1A0"/>
<dbReference type="MassIVE" id="Q8N1A0"/>
<dbReference type="PaxDb" id="9606-ENSP00000377616"/>
<dbReference type="PeptideAtlas" id="Q8N1A0"/>
<dbReference type="ProteomicsDB" id="71577">
    <molecule id="Q8N1A0-1"/>
</dbReference>
<dbReference type="ProteomicsDB" id="71578">
    <molecule id="Q8N1A0-2"/>
</dbReference>
<dbReference type="Antibodypedia" id="28682">
    <property type="antibodies" value="71 antibodies from 19 providers"/>
</dbReference>
<dbReference type="DNASU" id="125113"/>
<dbReference type="Ensembl" id="ENST00000394052.5">
    <molecule id="Q8N1A0-1"/>
    <property type="protein sequence ID" value="ENSP00000377616.3"/>
    <property type="gene ID" value="ENSG00000213424.9"/>
</dbReference>
<dbReference type="GeneID" id="125113"/>
<dbReference type="KEGG" id="hsa:125113"/>
<dbReference type="MANE-Select" id="ENST00000394052.5">
    <property type="protein sequence ID" value="ENSP00000377616.3"/>
    <property type="RefSeq nucleotide sequence ID" value="NM_152349.3"/>
    <property type="RefSeq protein sequence ID" value="NP_689562.1"/>
</dbReference>
<dbReference type="UCSC" id="uc002hvc.3">
    <molecule id="Q8N1A0-1"/>
    <property type="organism name" value="human"/>
</dbReference>
<dbReference type="AGR" id="HGNC:28695"/>
<dbReference type="CTD" id="125113"/>
<dbReference type="DisGeNET" id="125113"/>
<dbReference type="GeneCards" id="KRT222"/>
<dbReference type="HGNC" id="HGNC:28695">
    <property type="gene designation" value="KRT222"/>
</dbReference>
<dbReference type="HPA" id="ENSG00000213424">
    <property type="expression patterns" value="Tissue enhanced (brain, retina)"/>
</dbReference>
<dbReference type="neXtProt" id="NX_Q8N1A0"/>
<dbReference type="OpenTargets" id="ENSG00000213424"/>
<dbReference type="OpenTargets" id="ENSG00000264058"/>
<dbReference type="PharmGKB" id="PA165432008"/>
<dbReference type="VEuPathDB" id="HostDB:ENSG00000213424"/>
<dbReference type="eggNOG" id="ENOG502QQ07">
    <property type="taxonomic scope" value="Eukaryota"/>
</dbReference>
<dbReference type="GeneTree" id="ENSGT00940000159655"/>
<dbReference type="HOGENOM" id="CLU_101833_0_0_1"/>
<dbReference type="InParanoid" id="Q8N1A0"/>
<dbReference type="OMA" id="EEGCLHT"/>
<dbReference type="OrthoDB" id="8861979at2759"/>
<dbReference type="PAN-GO" id="Q8N1A0">
    <property type="GO annotations" value="0 GO annotations based on evolutionary models"/>
</dbReference>
<dbReference type="PhylomeDB" id="Q8N1A0"/>
<dbReference type="TreeFam" id="TF332442"/>
<dbReference type="PathwayCommons" id="Q8N1A0"/>
<dbReference type="SignaLink" id="Q8N1A0"/>
<dbReference type="BioGRID-ORCS" id="125113">
    <property type="hits" value="14 hits in 1143 CRISPR screens"/>
</dbReference>
<dbReference type="ChiTaRS" id="KRT222">
    <property type="organism name" value="human"/>
</dbReference>
<dbReference type="GenomeRNAi" id="125113"/>
<dbReference type="Pharos" id="Q8N1A0">
    <property type="development level" value="Tbio"/>
</dbReference>
<dbReference type="PRO" id="PR:Q8N1A0"/>
<dbReference type="Proteomes" id="UP000005640">
    <property type="component" value="Chromosome 17"/>
</dbReference>
<dbReference type="RNAct" id="Q8N1A0">
    <property type="molecule type" value="protein"/>
</dbReference>
<dbReference type="Bgee" id="ENSG00000213424">
    <property type="expression patterns" value="Expressed in lateral nuclear group of thalamus and 117 other cell types or tissues"/>
</dbReference>
<dbReference type="ExpressionAtlas" id="Q8N1A0">
    <property type="expression patterns" value="baseline and differential"/>
</dbReference>
<dbReference type="GO" id="GO:0005882">
    <property type="term" value="C:intermediate filament"/>
    <property type="evidence" value="ECO:0007669"/>
    <property type="project" value="UniProtKB-KW"/>
</dbReference>
<dbReference type="GO" id="GO:0005198">
    <property type="term" value="F:structural molecule activity"/>
    <property type="evidence" value="ECO:0007669"/>
    <property type="project" value="InterPro"/>
</dbReference>
<dbReference type="Gene3D" id="1.20.5.170">
    <property type="match status" value="1"/>
</dbReference>
<dbReference type="Gene3D" id="1.20.5.500">
    <property type="entry name" value="Single helix bin"/>
    <property type="match status" value="1"/>
</dbReference>
<dbReference type="InterPro" id="IPR018039">
    <property type="entry name" value="IF_conserved"/>
</dbReference>
<dbReference type="InterPro" id="IPR052857">
    <property type="entry name" value="IF_Keratin-like"/>
</dbReference>
<dbReference type="InterPro" id="IPR039008">
    <property type="entry name" value="IF_rod_dom"/>
</dbReference>
<dbReference type="InterPro" id="IPR002957">
    <property type="entry name" value="Keratin_I"/>
</dbReference>
<dbReference type="PANTHER" id="PTHR47082">
    <property type="entry name" value="KERATIN-LIKE PROTEIN KRT222"/>
    <property type="match status" value="1"/>
</dbReference>
<dbReference type="PANTHER" id="PTHR47082:SF1">
    <property type="entry name" value="KERATIN-LIKE PROTEIN KRT222"/>
    <property type="match status" value="1"/>
</dbReference>
<dbReference type="Pfam" id="PF00038">
    <property type="entry name" value="Filament"/>
    <property type="match status" value="1"/>
</dbReference>
<dbReference type="PRINTS" id="PR01248">
    <property type="entry name" value="TYPE1KERATIN"/>
</dbReference>
<dbReference type="SUPFAM" id="SSF64593">
    <property type="entry name" value="Intermediate filament protein, coiled coil region"/>
    <property type="match status" value="1"/>
</dbReference>
<dbReference type="PROSITE" id="PS00226">
    <property type="entry name" value="IF_ROD_1"/>
    <property type="match status" value="1"/>
</dbReference>
<dbReference type="PROSITE" id="PS51842">
    <property type="entry name" value="IF_ROD_2"/>
    <property type="match status" value="1"/>
</dbReference>